<name>G6PI_SHOC1</name>
<keyword id="KW-0963">Cytoplasm</keyword>
<keyword id="KW-0312">Gluconeogenesis</keyword>
<keyword id="KW-0324">Glycolysis</keyword>
<keyword id="KW-0413">Isomerase</keyword>
<keyword id="KW-0597">Phosphoprotein</keyword>
<keyword id="KW-1185">Reference proteome</keyword>
<proteinExistence type="inferred from homology"/>
<organism>
    <name type="scientific">Shouchella clausii (strain KSM-K16)</name>
    <name type="common">Alkalihalobacillus clausii</name>
    <dbReference type="NCBI Taxonomy" id="66692"/>
    <lineage>
        <taxon>Bacteria</taxon>
        <taxon>Bacillati</taxon>
        <taxon>Bacillota</taxon>
        <taxon>Bacilli</taxon>
        <taxon>Bacillales</taxon>
        <taxon>Bacillaceae</taxon>
        <taxon>Shouchella</taxon>
    </lineage>
</organism>
<evidence type="ECO:0000255" key="1">
    <source>
        <dbReference type="HAMAP-Rule" id="MF_00473"/>
    </source>
</evidence>
<sequence length="451" mass="50388">MAHIQFDYSKALSFFGEHEVAYMREAVRAAHKALHEKTGQGNDFLGWIDLPVDYDKEEFARIQKAAEKIRHDSDVLLVVGIGGSYLGARAAIEALNHSFFNQLPKEKRNAPQVIFVGQNISSTYLSDVLDLLDGKDVSVNVISKSGTTTEPAIAFRVFRDYLEKKYGKEEARKRIYATTDKERGALKTLANEEGYESFVIPDDVGGRFSVLTAVGLLPIAVSGLAIEDMMKGAADAREAFSTGELSENAAYQYAAIRNILYNKGKTIELLVNYEPHLHYVSEWWKQLFGESEGKDQKGIYPASVDFSTDLHSMGQYVQDGRRNLFETVLHVEAVDKHITIEEAESDLDGLNYLAGKTMDFVNKQAFKGTMLAHTDGNVPNLVVSIPKLDEYSFGYLVYFFEKAVAMSGYLLGVNPFDQPGVEAYKKNMFALLGKPGFEEEKNKLESRLTDN</sequence>
<reference key="1">
    <citation type="submission" date="2003-10" db="EMBL/GenBank/DDBJ databases">
        <title>The complete genome sequence of the alkaliphilic Bacillus clausii KSM-K16.</title>
        <authorList>
            <person name="Takaki Y."/>
            <person name="Kageyama Y."/>
            <person name="Shimamura S."/>
            <person name="Suzuki H."/>
            <person name="Nishi S."/>
            <person name="Hatada Y."/>
            <person name="Kawai S."/>
            <person name="Ito S."/>
            <person name="Horikoshi K."/>
        </authorList>
    </citation>
    <scope>NUCLEOTIDE SEQUENCE [LARGE SCALE GENOMIC DNA]</scope>
    <source>
        <strain>KSM-K16</strain>
    </source>
</reference>
<comment type="function">
    <text evidence="1">Catalyzes the reversible isomerization of glucose-6-phosphate to fructose-6-phosphate.</text>
</comment>
<comment type="catalytic activity">
    <reaction evidence="1">
        <text>alpha-D-glucose 6-phosphate = beta-D-fructose 6-phosphate</text>
        <dbReference type="Rhea" id="RHEA:11816"/>
        <dbReference type="ChEBI" id="CHEBI:57634"/>
        <dbReference type="ChEBI" id="CHEBI:58225"/>
        <dbReference type="EC" id="5.3.1.9"/>
    </reaction>
</comment>
<comment type="pathway">
    <text evidence="1">Carbohydrate biosynthesis; gluconeogenesis.</text>
</comment>
<comment type="pathway">
    <text evidence="1">Carbohydrate degradation; glycolysis; D-glyceraldehyde 3-phosphate and glycerone phosphate from D-glucose: step 2/4.</text>
</comment>
<comment type="subcellular location">
    <subcellularLocation>
        <location evidence="1">Cytoplasm</location>
    </subcellularLocation>
</comment>
<comment type="similarity">
    <text evidence="1">Belongs to the GPI family.</text>
</comment>
<dbReference type="EC" id="5.3.1.9" evidence="1"/>
<dbReference type="EMBL" id="AP006627">
    <property type="protein sequence ID" value="BAD65440.1"/>
    <property type="molecule type" value="Genomic_DNA"/>
</dbReference>
<dbReference type="RefSeq" id="WP_011247748.1">
    <property type="nucleotide sequence ID" value="NC_006582.1"/>
</dbReference>
<dbReference type="SMR" id="Q5WDX0"/>
<dbReference type="STRING" id="66692.ABC2906"/>
<dbReference type="KEGG" id="bcl:ABC2906"/>
<dbReference type="eggNOG" id="COG0166">
    <property type="taxonomic scope" value="Bacteria"/>
</dbReference>
<dbReference type="HOGENOM" id="CLU_037303_0_1_9"/>
<dbReference type="OrthoDB" id="140919at2"/>
<dbReference type="UniPathway" id="UPA00109">
    <property type="reaction ID" value="UER00181"/>
</dbReference>
<dbReference type="UniPathway" id="UPA00138"/>
<dbReference type="Proteomes" id="UP000001168">
    <property type="component" value="Chromosome"/>
</dbReference>
<dbReference type="GO" id="GO:0005829">
    <property type="term" value="C:cytosol"/>
    <property type="evidence" value="ECO:0007669"/>
    <property type="project" value="TreeGrafter"/>
</dbReference>
<dbReference type="GO" id="GO:0097367">
    <property type="term" value="F:carbohydrate derivative binding"/>
    <property type="evidence" value="ECO:0007669"/>
    <property type="project" value="InterPro"/>
</dbReference>
<dbReference type="GO" id="GO:0004347">
    <property type="term" value="F:glucose-6-phosphate isomerase activity"/>
    <property type="evidence" value="ECO:0007669"/>
    <property type="project" value="UniProtKB-UniRule"/>
</dbReference>
<dbReference type="GO" id="GO:0048029">
    <property type="term" value="F:monosaccharide binding"/>
    <property type="evidence" value="ECO:0007669"/>
    <property type="project" value="TreeGrafter"/>
</dbReference>
<dbReference type="GO" id="GO:0006094">
    <property type="term" value="P:gluconeogenesis"/>
    <property type="evidence" value="ECO:0007669"/>
    <property type="project" value="UniProtKB-UniRule"/>
</dbReference>
<dbReference type="GO" id="GO:0051156">
    <property type="term" value="P:glucose 6-phosphate metabolic process"/>
    <property type="evidence" value="ECO:0007669"/>
    <property type="project" value="TreeGrafter"/>
</dbReference>
<dbReference type="GO" id="GO:0006096">
    <property type="term" value="P:glycolytic process"/>
    <property type="evidence" value="ECO:0007669"/>
    <property type="project" value="UniProtKB-UniRule"/>
</dbReference>
<dbReference type="CDD" id="cd05015">
    <property type="entry name" value="SIS_PGI_1"/>
    <property type="match status" value="1"/>
</dbReference>
<dbReference type="CDD" id="cd05016">
    <property type="entry name" value="SIS_PGI_2"/>
    <property type="match status" value="1"/>
</dbReference>
<dbReference type="FunFam" id="3.40.50.10490:FF:000015">
    <property type="entry name" value="Glucose-6-phosphate isomerase"/>
    <property type="match status" value="1"/>
</dbReference>
<dbReference type="FunFam" id="3.40.50.10490:FF:000016">
    <property type="entry name" value="Glucose-6-phosphate isomerase"/>
    <property type="match status" value="1"/>
</dbReference>
<dbReference type="FunFam" id="3.40.50.10490:FF:000020">
    <property type="entry name" value="Glucose-6-phosphate isomerase"/>
    <property type="match status" value="1"/>
</dbReference>
<dbReference type="Gene3D" id="3.40.50.10490">
    <property type="entry name" value="Glucose-6-phosphate isomerase like protein, domain 1"/>
    <property type="match status" value="3"/>
</dbReference>
<dbReference type="HAMAP" id="MF_00473">
    <property type="entry name" value="G6P_isomerase"/>
    <property type="match status" value="1"/>
</dbReference>
<dbReference type="InterPro" id="IPR001672">
    <property type="entry name" value="G6P_Isomerase"/>
</dbReference>
<dbReference type="InterPro" id="IPR018189">
    <property type="entry name" value="Phosphoglucose_isomerase_CS"/>
</dbReference>
<dbReference type="InterPro" id="IPR046348">
    <property type="entry name" value="SIS_dom_sf"/>
</dbReference>
<dbReference type="InterPro" id="IPR035476">
    <property type="entry name" value="SIS_PGI_1"/>
</dbReference>
<dbReference type="InterPro" id="IPR035482">
    <property type="entry name" value="SIS_PGI_2"/>
</dbReference>
<dbReference type="NCBIfam" id="NF010697">
    <property type="entry name" value="PRK14097.1"/>
    <property type="match status" value="1"/>
</dbReference>
<dbReference type="PANTHER" id="PTHR11469">
    <property type="entry name" value="GLUCOSE-6-PHOSPHATE ISOMERASE"/>
    <property type="match status" value="1"/>
</dbReference>
<dbReference type="PANTHER" id="PTHR11469:SF1">
    <property type="entry name" value="GLUCOSE-6-PHOSPHATE ISOMERASE"/>
    <property type="match status" value="1"/>
</dbReference>
<dbReference type="Pfam" id="PF00342">
    <property type="entry name" value="PGI"/>
    <property type="match status" value="1"/>
</dbReference>
<dbReference type="PRINTS" id="PR00662">
    <property type="entry name" value="G6PISOMERASE"/>
</dbReference>
<dbReference type="SUPFAM" id="SSF53697">
    <property type="entry name" value="SIS domain"/>
    <property type="match status" value="1"/>
</dbReference>
<dbReference type="PROSITE" id="PS00765">
    <property type="entry name" value="P_GLUCOSE_ISOMERASE_1"/>
    <property type="match status" value="1"/>
</dbReference>
<dbReference type="PROSITE" id="PS00174">
    <property type="entry name" value="P_GLUCOSE_ISOMERASE_2"/>
    <property type="match status" value="1"/>
</dbReference>
<dbReference type="PROSITE" id="PS51463">
    <property type="entry name" value="P_GLUCOSE_ISOMERASE_3"/>
    <property type="match status" value="1"/>
</dbReference>
<gene>
    <name evidence="1" type="primary">pgi</name>
    <name type="ordered locus">ABC2906</name>
</gene>
<accession>Q5WDX0</accession>
<protein>
    <recommendedName>
        <fullName evidence="1">Glucose-6-phosphate isomerase</fullName>
        <shortName evidence="1">GPI</shortName>
        <ecNumber evidence="1">5.3.1.9</ecNumber>
    </recommendedName>
    <alternativeName>
        <fullName evidence="1">Phosphoglucose isomerase</fullName>
        <shortName evidence="1">PGI</shortName>
    </alternativeName>
    <alternativeName>
        <fullName evidence="1">Phosphohexose isomerase</fullName>
        <shortName evidence="1">PHI</shortName>
    </alternativeName>
</protein>
<feature type="chain" id="PRO_0000180588" description="Glucose-6-phosphate isomerase">
    <location>
        <begin position="1"/>
        <end position="451"/>
    </location>
</feature>
<feature type="active site" description="Proton donor" evidence="1">
    <location>
        <position position="290"/>
    </location>
</feature>
<feature type="active site" evidence="1">
    <location>
        <position position="311"/>
    </location>
</feature>
<feature type="active site" evidence="1">
    <location>
        <position position="425"/>
    </location>
</feature>
<feature type="modified residue" description="Phosphothreonine" evidence="1">
    <location>
        <position position="38"/>
    </location>
</feature>